<evidence type="ECO:0000250" key="1">
    <source>
        <dbReference type="UniProtKB" id="P23083"/>
    </source>
</evidence>
<evidence type="ECO:0000255" key="2"/>
<evidence type="ECO:0000255" key="3">
    <source>
        <dbReference type="PROSITE-ProRule" id="PRU00114"/>
    </source>
</evidence>
<evidence type="ECO:0000255" key="4">
    <source>
        <dbReference type="PROSITE-ProRule" id="PRU00498"/>
    </source>
</evidence>
<evidence type="ECO:0000303" key="5">
    <source>
    </source>
</evidence>
<evidence type="ECO:0000303" key="6">
    <source>
    </source>
</evidence>
<evidence type="ECO:0000303" key="7">
    <source>
    </source>
</evidence>
<evidence type="ECO:0000303" key="8">
    <source>
    </source>
</evidence>
<evidence type="ECO:0000303" key="9">
    <source>
    </source>
</evidence>
<evidence type="ECO:0000303" key="10">
    <source>
    </source>
</evidence>
<evidence type="ECO:0000303" key="11">
    <source ref="4"/>
</evidence>
<evidence type="ECO:0000305" key="12"/>
<evidence type="ECO:0000312" key="13">
    <source>
        <dbReference type="HGNC" id="HGNC:5583"/>
    </source>
</evidence>
<organism>
    <name type="scientific">Homo sapiens</name>
    <name type="common">Human</name>
    <dbReference type="NCBI Taxonomy" id="9606"/>
    <lineage>
        <taxon>Eukaryota</taxon>
        <taxon>Metazoa</taxon>
        <taxon>Chordata</taxon>
        <taxon>Craniata</taxon>
        <taxon>Vertebrata</taxon>
        <taxon>Euteleostomi</taxon>
        <taxon>Mammalia</taxon>
        <taxon>Eutheria</taxon>
        <taxon>Euarchontoglires</taxon>
        <taxon>Primates</taxon>
        <taxon>Haplorrhini</taxon>
        <taxon>Catarrhini</taxon>
        <taxon>Hominidae</taxon>
        <taxon>Homo</taxon>
    </lineage>
</organism>
<reference key="1">
    <citation type="journal article" date="2003" name="Nature">
        <title>The DNA sequence and analysis of human chromosome 14.</title>
        <authorList>
            <person name="Heilig R."/>
            <person name="Eckenberg R."/>
            <person name="Petit J.-L."/>
            <person name="Fonknechten N."/>
            <person name="Da Silva C."/>
            <person name="Cattolico L."/>
            <person name="Levy M."/>
            <person name="Barbe V."/>
            <person name="De Berardinis V."/>
            <person name="Ureta-Vidal A."/>
            <person name="Pelletier E."/>
            <person name="Vico V."/>
            <person name="Anthouard V."/>
            <person name="Rowen L."/>
            <person name="Madan A."/>
            <person name="Qin S."/>
            <person name="Sun H."/>
            <person name="Du H."/>
            <person name="Pepin K."/>
            <person name="Artiguenave F."/>
            <person name="Robert C."/>
            <person name="Cruaud C."/>
            <person name="Bruels T."/>
            <person name="Jaillon O."/>
            <person name="Friedlander L."/>
            <person name="Samson G."/>
            <person name="Brottier P."/>
            <person name="Cure S."/>
            <person name="Segurens B."/>
            <person name="Aniere F."/>
            <person name="Samain S."/>
            <person name="Crespeau H."/>
            <person name="Abbasi N."/>
            <person name="Aiach N."/>
            <person name="Boscus D."/>
            <person name="Dickhoff R."/>
            <person name="Dors M."/>
            <person name="Dubois I."/>
            <person name="Friedman C."/>
            <person name="Gouyvenoux M."/>
            <person name="James R."/>
            <person name="Madan A."/>
            <person name="Mairey-Estrada B."/>
            <person name="Mangenot S."/>
            <person name="Martins N."/>
            <person name="Menard M."/>
            <person name="Oztas S."/>
            <person name="Ratcliffe A."/>
            <person name="Shaffer T."/>
            <person name="Trask B."/>
            <person name="Vacherie B."/>
            <person name="Bellemere C."/>
            <person name="Belser C."/>
            <person name="Besnard-Gonnet M."/>
            <person name="Bartol-Mavel D."/>
            <person name="Boutard M."/>
            <person name="Briez-Silla S."/>
            <person name="Combette S."/>
            <person name="Dufosse-Laurent V."/>
            <person name="Ferron C."/>
            <person name="Lechaplais C."/>
            <person name="Louesse C."/>
            <person name="Muselet D."/>
            <person name="Magdelenat G."/>
            <person name="Pateau E."/>
            <person name="Petit E."/>
            <person name="Sirvain-Trukniewicz P."/>
            <person name="Trybou A."/>
            <person name="Vega-Czarny N."/>
            <person name="Bataille E."/>
            <person name="Bluet E."/>
            <person name="Bordelais I."/>
            <person name="Dubois M."/>
            <person name="Dumont C."/>
            <person name="Guerin T."/>
            <person name="Haffray S."/>
            <person name="Hammadi R."/>
            <person name="Muanga J."/>
            <person name="Pellouin V."/>
            <person name="Robert D."/>
            <person name="Wunderle E."/>
            <person name="Gauguet G."/>
            <person name="Roy A."/>
            <person name="Sainte-Marthe L."/>
            <person name="Verdier J."/>
            <person name="Verdier-Discala C."/>
            <person name="Hillier L.W."/>
            <person name="Fulton L."/>
            <person name="McPherson J."/>
            <person name="Matsuda F."/>
            <person name="Wilson R."/>
            <person name="Scarpelli C."/>
            <person name="Gyapay G."/>
            <person name="Wincker P."/>
            <person name="Saurin W."/>
            <person name="Quetier F."/>
            <person name="Waterston R."/>
            <person name="Hood L."/>
            <person name="Weissenbach J."/>
        </authorList>
    </citation>
    <scope>NUCLEOTIDE SEQUENCE [LARGE SCALE GENOMIC DNA] (IMGT ALLELE IGHV3-16*02)</scope>
</reference>
<reference key="2">
    <citation type="journal article" date="1998" name="Exp. Clin. Immunogenet.">
        <title>IMGT (ImMunoGeneTics) locus on focus. A new section of Experimental and Clinical Immunogenetics.</title>
        <authorList>
            <person name="Lefranc M.P."/>
        </authorList>
    </citation>
    <scope>CHARACTERIZATION</scope>
</reference>
<reference key="3">
    <citation type="journal article" date="2001" name="Exp. Clin. Immunogenet.">
        <title>Nomenclature of the human immunoglobulin heavy (IGH) genes.</title>
        <authorList>
            <person name="Lefranc M.P."/>
        </authorList>
    </citation>
    <scope>NOMENCLATURE</scope>
</reference>
<reference key="4">
    <citation type="book" date="2001" name="The Immunoglobulin FactsBook.">
        <title>The Immunoglobulin FactsBook.</title>
        <editorList>
            <person name="Lefranc M.P."/>
            <person name="Lefranc G."/>
        </editorList>
        <authorList>
            <person name="Lefranc M.P."/>
            <person name="Lefranc G."/>
        </authorList>
    </citation>
    <scope>NOMENCLATURE</scope>
</reference>
<reference key="5">
    <citation type="journal article" date="2007" name="Annu. Rev. Genet.">
        <title>Immunoglobulin somatic hypermutation.</title>
        <authorList>
            <person name="Teng G."/>
            <person name="Papavasiliou F.N."/>
        </authorList>
    </citation>
    <scope>REVIEW ON SOMATIC HYPERMUTATION</scope>
</reference>
<reference key="6">
    <citation type="journal article" date="2010" name="J. Allergy Clin. Immunol.">
        <title>Structure and function of immunoglobulins.</title>
        <authorList>
            <person name="Schroeder H.W. Jr."/>
            <person name="Cavacini L."/>
        </authorList>
    </citation>
    <scope>REVIEW ON IMMUNOGLOBULINS</scope>
</reference>
<reference key="7">
    <citation type="journal article" date="2012" name="Nat. Rev. Immunol.">
        <title>Molecular programming of B cell memory.</title>
        <authorList>
            <person name="McHeyzer-Williams M."/>
            <person name="Okitsu S."/>
            <person name="Wang N."/>
            <person name="McHeyzer-Williams L."/>
        </authorList>
    </citation>
    <scope>REVIEW ON FUNCTION</scope>
</reference>
<reference key="8">
    <citation type="journal article" date="2014" name="Front. Immunol.">
        <title>Immunoglobulin and T Cell Receptor Genes: IMGT((R)) and the Birth and Rise of Immunoinformatics.</title>
        <authorList>
            <person name="Lefranc M.P."/>
        </authorList>
    </citation>
    <scope>NOMENCLATURE</scope>
</reference>
<sequence length="117" mass="13070">MEFGLSWVFLAGILKGVQCEVQLVESGGGLVQPGGSLRLSCAASGFTFSNSDMNWARKAPGKGLEWVSGVSWNGSRTHYVDSVKRRFIISRDNSRNSLYLQKNRRRAEDMAVYYCVR</sequence>
<keyword id="KW-1064">Adaptive immunity</keyword>
<keyword id="KW-1003">Cell membrane</keyword>
<keyword id="KW-1015">Disulfide bond</keyword>
<keyword id="KW-0325">Glycoprotein</keyword>
<keyword id="KW-0391">Immunity</keyword>
<keyword id="KW-1280">Immunoglobulin</keyword>
<keyword id="KW-0393">Immunoglobulin domain</keyword>
<keyword id="KW-0472">Membrane</keyword>
<keyword id="KW-1267">Proteomics identification</keyword>
<keyword id="KW-1185">Reference proteome</keyword>
<keyword id="KW-0964">Secreted</keyword>
<keyword id="KW-0732">Signal</keyword>
<proteinExistence type="evidence at protein level"/>
<dbReference type="EMBL" id="AC247036">
    <property type="status" value="NOT_ANNOTATED_CDS"/>
    <property type="molecule type" value="Genomic_DNA"/>
</dbReference>
<dbReference type="SMR" id="A0A0C4DH30"/>
<dbReference type="FunCoup" id="A0A0C4DH30">
    <property type="interactions" value="16"/>
</dbReference>
<dbReference type="STRING" id="9606.ENSP00000478725"/>
<dbReference type="GlyCosmos" id="A0A0C4DH30">
    <property type="glycosylation" value="1 site, No reported glycans"/>
</dbReference>
<dbReference type="GlyGen" id="A0A0C4DH30">
    <property type="glycosylation" value="1 site"/>
</dbReference>
<dbReference type="BioMuta" id="IGHV3-16"/>
<dbReference type="MassIVE" id="A0A0C4DH30"/>
<dbReference type="Ensembl" id="ENST00000390604.2">
    <property type="protein sequence ID" value="ENSP00000375013.2"/>
    <property type="gene ID" value="ENSG00000211944.2"/>
</dbReference>
<dbReference type="Ensembl" id="ENST00000631755.1">
    <property type="protein sequence ID" value="ENSP00000487809.1"/>
    <property type="gene ID" value="ENSG00000282653.1"/>
</dbReference>
<dbReference type="AGR" id="HGNC:5583"/>
<dbReference type="GeneCards" id="IGHV3-16"/>
<dbReference type="HGNC" id="HGNC:5583">
    <property type="gene designation" value="IGHV3-16"/>
</dbReference>
<dbReference type="HPA" id="ENSG00000211944">
    <property type="expression patterns" value="Not detected"/>
</dbReference>
<dbReference type="neXtProt" id="NX_A0A0C4DH30"/>
<dbReference type="VEuPathDB" id="HostDB:ENSG00000211944"/>
<dbReference type="GeneTree" id="ENSGT00940000164192"/>
<dbReference type="HOGENOM" id="CLU_077975_5_2_1"/>
<dbReference type="InParanoid" id="A0A0C4DH30"/>
<dbReference type="OMA" id="WISAIRY"/>
<dbReference type="OrthoDB" id="9945861at2759"/>
<dbReference type="PAN-GO" id="A0A0C4DH30">
    <property type="GO annotations" value="11 GO annotations based on evolutionary models"/>
</dbReference>
<dbReference type="PhylomeDB" id="A0A0C4DH30"/>
<dbReference type="PRO" id="PR:A0A0C4DH30"/>
<dbReference type="Proteomes" id="UP000005640">
    <property type="component" value="Chromosome 14"/>
</dbReference>
<dbReference type="RNAct" id="A0A0C4DH30">
    <property type="molecule type" value="protein"/>
</dbReference>
<dbReference type="Bgee" id="ENSG00000211944">
    <property type="expression patterns" value="Expressed in male germ line stem cell (sensu Vertebrata) in testis and 44 other cell types or tissues"/>
</dbReference>
<dbReference type="GO" id="GO:0005576">
    <property type="term" value="C:extracellular region"/>
    <property type="evidence" value="ECO:0007669"/>
    <property type="project" value="UniProtKB-SubCell"/>
</dbReference>
<dbReference type="GO" id="GO:0019814">
    <property type="term" value="C:immunoglobulin complex"/>
    <property type="evidence" value="ECO:0007669"/>
    <property type="project" value="UniProtKB-KW"/>
</dbReference>
<dbReference type="GO" id="GO:0005886">
    <property type="term" value="C:plasma membrane"/>
    <property type="evidence" value="ECO:0007669"/>
    <property type="project" value="UniProtKB-SubCell"/>
</dbReference>
<dbReference type="GO" id="GO:0003823">
    <property type="term" value="F:antigen binding"/>
    <property type="evidence" value="ECO:0000318"/>
    <property type="project" value="GO_Central"/>
</dbReference>
<dbReference type="GO" id="GO:0016064">
    <property type="term" value="P:immunoglobulin mediated immune response"/>
    <property type="evidence" value="ECO:0000318"/>
    <property type="project" value="GO_Central"/>
</dbReference>
<dbReference type="FunFam" id="2.60.40.10:FF:001259">
    <property type="entry name" value="Immunoglobulin heavy variable 13-2"/>
    <property type="match status" value="1"/>
</dbReference>
<dbReference type="Gene3D" id="2.60.40.10">
    <property type="entry name" value="Immunoglobulins"/>
    <property type="match status" value="1"/>
</dbReference>
<dbReference type="InterPro" id="IPR007110">
    <property type="entry name" value="Ig-like_dom"/>
</dbReference>
<dbReference type="InterPro" id="IPR036179">
    <property type="entry name" value="Ig-like_dom_sf"/>
</dbReference>
<dbReference type="InterPro" id="IPR013783">
    <property type="entry name" value="Ig-like_fold"/>
</dbReference>
<dbReference type="InterPro" id="IPR013106">
    <property type="entry name" value="Ig_V-set"/>
</dbReference>
<dbReference type="InterPro" id="IPR050199">
    <property type="entry name" value="IgHV"/>
</dbReference>
<dbReference type="PANTHER" id="PTHR23266">
    <property type="entry name" value="IMMUNOGLOBULIN HEAVY CHAIN"/>
    <property type="match status" value="1"/>
</dbReference>
<dbReference type="Pfam" id="PF07686">
    <property type="entry name" value="V-set"/>
    <property type="match status" value="1"/>
</dbReference>
<dbReference type="SMART" id="SM00406">
    <property type="entry name" value="IGv"/>
    <property type="match status" value="1"/>
</dbReference>
<dbReference type="SUPFAM" id="SSF48726">
    <property type="entry name" value="Immunoglobulin"/>
    <property type="match status" value="1"/>
</dbReference>
<dbReference type="PROSITE" id="PS50835">
    <property type="entry name" value="IG_LIKE"/>
    <property type="match status" value="1"/>
</dbReference>
<name>HV316_HUMAN</name>
<feature type="signal peptide" evidence="2">
    <location>
        <begin position="1"/>
        <end position="19"/>
    </location>
</feature>
<feature type="chain" id="PRO_5014019437" description="Probable non-functional immunoglobulin heavy variable 3-16" evidence="2">
    <location>
        <begin position="20"/>
        <end position="117"/>
    </location>
</feature>
<feature type="domain" description="Ig-like" evidence="3">
    <location>
        <begin position="21"/>
        <end position="117" status="greater than"/>
    </location>
</feature>
<feature type="region of interest" description="Framework-1" evidence="1">
    <location>
        <begin position="20"/>
        <end position="44"/>
    </location>
</feature>
<feature type="region of interest" description="Complementarity-determining-1" evidence="1">
    <location>
        <begin position="45"/>
        <end position="52"/>
    </location>
</feature>
<feature type="region of interest" description="Framework-2" evidence="1">
    <location>
        <begin position="53"/>
        <end position="69"/>
    </location>
</feature>
<feature type="region of interest" description="Complementarity-determining-2" evidence="1">
    <location>
        <begin position="70"/>
        <end position="77"/>
    </location>
</feature>
<feature type="region of interest" description="Framework-3" evidence="1">
    <location>
        <begin position="78"/>
        <end position="115"/>
    </location>
</feature>
<feature type="region of interest" description="Complementarity-determining-3" evidence="1">
    <location>
        <begin position="116"/>
        <end position="117" status="greater than"/>
    </location>
</feature>
<feature type="glycosylation site" description="N-linked (GlcNAc...) asparagine" evidence="4">
    <location>
        <position position="73"/>
    </location>
</feature>
<feature type="disulfide bond" evidence="3">
    <location>
        <begin position="41"/>
        <end position="115"/>
    </location>
</feature>
<feature type="non-terminal residue">
    <location>
        <position position="117"/>
    </location>
</feature>
<protein>
    <recommendedName>
        <fullName evidence="12">Probable non-functional immunoglobulin heavy variable 3-16</fullName>
    </recommendedName>
</protein>
<gene>
    <name evidence="5 11 13" type="primary">IGHV3-16</name>
</gene>
<comment type="function">
    <text evidence="6 7 8 9 10">Probable non-functional open reading frame (ORF) of V region of the variable domain of immunoglobulin heavy chains (PubMed:24600447). Non-functional ORF generally cannot participate in the synthesis of a productive immunoglobulin chain due to altered V-(D)-J or switch recombination and/or splicing site (at mRNA level) and/or conserved amino acid change (protein level) (PubMed:9619395). Immunoglobulins, also known as antibodies, are membrane-bound or secreted glycoproteins produced by B lymphocytes. In the recognition phase of humoral immunity, the membrane-bound immunoglobulins serve as receptors which, upon binding of a specific antigen, trigger the clonal expansion and differentiation of B lymphocytes into immunoglobulins-secreting plasma cells. Secreted immunoglobulins mediate the effector phase of humoral immunity, which results in the elimination of bound antigens (PubMed:20176268, PubMed:22158414). The antigen binding site is formed by the variable domain of one heavy chain, together with that of its associated light chain. Thus, each immunoglobulin has two antigen binding sites with remarkable affinity for a particular antigen. The variable domains are assembled by a process called V-(D)-J rearrangement and can then be subjected to somatic hypermutations which, after exposure to antigen and selection, allow affinity maturation for a particular antigen (PubMed:17576170, PubMed:20176268).</text>
</comment>
<comment type="subunit">
    <text evidence="7">Immunoglobulins are composed of two identical heavy chains and two identical light chains; disulfide-linked.</text>
</comment>
<comment type="subcellular location">
    <subcellularLocation>
        <location evidence="7 8">Secreted</location>
    </subcellularLocation>
    <subcellularLocation>
        <location evidence="7 8">Cell membrane</location>
    </subcellularLocation>
</comment>
<comment type="polymorphism">
    <text evidence="12">There are several alleles. The sequence shown is that of IMGT allele IGHV3-16*02.</text>
</comment>
<comment type="caution">
    <text evidence="10 12">Most probably a non-functional protein that cannot participate in the synthesis of a productive immunoglobulin chain due to an unusual recombination signal (RS) sequence altering V-(D)-J recombination (PubMed:9619395).</text>
</comment>
<accession>A0A0C4DH30</accession>